<feature type="chain" id="PRO_1000071398" description="ATP phosphoribosyltransferase regulatory subunit">
    <location>
        <begin position="1"/>
        <end position="272"/>
    </location>
</feature>
<evidence type="ECO:0000255" key="1">
    <source>
        <dbReference type="HAMAP-Rule" id="MF_00125"/>
    </source>
</evidence>
<accession>A6QKG8</accession>
<reference key="1">
    <citation type="journal article" date="2008" name="J. Bacteriol.">
        <title>Genome sequence of Staphylococcus aureus strain Newman and comparative analysis of staphylococcal genomes: polymorphism and evolution of two major pathogenicity islands.</title>
        <authorList>
            <person name="Baba T."/>
            <person name="Bae T."/>
            <person name="Schneewind O."/>
            <person name="Takeuchi F."/>
            <person name="Hiramatsu K."/>
        </authorList>
    </citation>
    <scope>NUCLEOTIDE SEQUENCE [LARGE SCALE GENOMIC DNA]</scope>
    <source>
        <strain>Newman</strain>
    </source>
</reference>
<keyword id="KW-0028">Amino-acid biosynthesis</keyword>
<keyword id="KW-0963">Cytoplasm</keyword>
<keyword id="KW-0368">Histidine biosynthesis</keyword>
<organism>
    <name type="scientific">Staphylococcus aureus (strain Newman)</name>
    <dbReference type="NCBI Taxonomy" id="426430"/>
    <lineage>
        <taxon>Bacteria</taxon>
        <taxon>Bacillati</taxon>
        <taxon>Bacillota</taxon>
        <taxon>Bacilli</taxon>
        <taxon>Bacillales</taxon>
        <taxon>Staphylococcaceae</taxon>
        <taxon>Staphylococcus</taxon>
    </lineage>
</organism>
<dbReference type="EMBL" id="AP009351">
    <property type="protein sequence ID" value="BAF68850.1"/>
    <property type="molecule type" value="Genomic_DNA"/>
</dbReference>
<dbReference type="RefSeq" id="WP_001065590.1">
    <property type="nucleotide sequence ID" value="NZ_JBBIAE010000005.1"/>
</dbReference>
<dbReference type="SMR" id="A6QKG8"/>
<dbReference type="KEGG" id="sae:NWMN_2578"/>
<dbReference type="HOGENOM" id="CLU_089652_0_0_9"/>
<dbReference type="UniPathway" id="UPA00031">
    <property type="reaction ID" value="UER00006"/>
</dbReference>
<dbReference type="Proteomes" id="UP000006386">
    <property type="component" value="Chromosome"/>
</dbReference>
<dbReference type="GO" id="GO:0005737">
    <property type="term" value="C:cytoplasm"/>
    <property type="evidence" value="ECO:0007669"/>
    <property type="project" value="UniProtKB-SubCell"/>
</dbReference>
<dbReference type="GO" id="GO:0140096">
    <property type="term" value="F:catalytic activity, acting on a protein"/>
    <property type="evidence" value="ECO:0007669"/>
    <property type="project" value="UniProtKB-ARBA"/>
</dbReference>
<dbReference type="GO" id="GO:0016740">
    <property type="term" value="F:transferase activity"/>
    <property type="evidence" value="ECO:0007669"/>
    <property type="project" value="UniProtKB-ARBA"/>
</dbReference>
<dbReference type="GO" id="GO:0000105">
    <property type="term" value="P:L-histidine biosynthetic process"/>
    <property type="evidence" value="ECO:0007669"/>
    <property type="project" value="UniProtKB-UniRule"/>
</dbReference>
<dbReference type="Gene3D" id="3.30.930.10">
    <property type="entry name" value="Bira Bifunctional Protein, Domain 2"/>
    <property type="match status" value="1"/>
</dbReference>
<dbReference type="HAMAP" id="MF_00125">
    <property type="entry name" value="HisZ"/>
    <property type="match status" value="1"/>
</dbReference>
<dbReference type="InterPro" id="IPR045864">
    <property type="entry name" value="aa-tRNA-synth_II/BPL/LPL"/>
</dbReference>
<dbReference type="InterPro" id="IPR041715">
    <property type="entry name" value="HisRS-like_core"/>
</dbReference>
<dbReference type="InterPro" id="IPR004517">
    <property type="entry name" value="HisZ"/>
</dbReference>
<dbReference type="NCBIfam" id="NF008947">
    <property type="entry name" value="PRK12294.1"/>
    <property type="match status" value="1"/>
</dbReference>
<dbReference type="Pfam" id="PF13393">
    <property type="entry name" value="tRNA-synt_His"/>
    <property type="match status" value="1"/>
</dbReference>
<dbReference type="SUPFAM" id="SSF55681">
    <property type="entry name" value="Class II aaRS and biotin synthetases"/>
    <property type="match status" value="1"/>
</dbReference>
<name>HISZ_STAAE</name>
<gene>
    <name evidence="1" type="primary">hisZ</name>
    <name type="ordered locus">NWMN_2578</name>
</gene>
<proteinExistence type="inferred from homology"/>
<comment type="function">
    <text evidence="1">Required for the first step of histidine biosynthesis. May allow the feedback regulation of ATP phosphoribosyltransferase activity by histidine.</text>
</comment>
<comment type="pathway">
    <text evidence="1">Amino-acid biosynthesis; L-histidine biosynthesis; L-histidine from 5-phospho-alpha-D-ribose 1-diphosphate: step 1/9.</text>
</comment>
<comment type="subunit">
    <text evidence="1">Heteromultimer composed of HisG and HisZ subunits.</text>
</comment>
<comment type="subcellular location">
    <subcellularLocation>
        <location evidence="1">Cytoplasm</location>
    </subcellularLocation>
</comment>
<comment type="miscellaneous">
    <text>This function is generally fulfilled by the C-terminal part of HisG, which is missing in some bacteria such as this one.</text>
</comment>
<comment type="similarity">
    <text evidence="1">Belongs to the class-II aminoacyl-tRNA synthetase family. HisZ subfamily.</text>
</comment>
<protein>
    <recommendedName>
        <fullName evidence="1">ATP phosphoribosyltransferase regulatory subunit</fullName>
    </recommendedName>
</protein>
<sequence length="272" mass="31681">MNNSEQLIALKESETAFLKYFNKADYELVDFSVVEKLDWKQLNHEDLQQMGERNFWQHEHQIYALRNDFTDQLLRYYSMYPTAATKVAYTGLIIRNNEAAVQVGLENYAPSLANVQQSLKLFIQFIQQQLRDNVHFVVLGHYQLLDALLDKSLQTPDILSMIEERNLSGLVTYLSTEHPIVQILKENTQQQLNVLEHYIPNDHPALVELKIWERWLHKQGYKDIHLDITAQPPRSYYTGLFIQCHFAENESRVLTGGYYKGSIEGFGLGLTL</sequence>